<evidence type="ECO:0000250" key="1">
    <source>
        <dbReference type="UniProtKB" id="P10905"/>
    </source>
</evidence>
<evidence type="ECO:0000255" key="2"/>
<evidence type="ECO:0000255" key="3">
    <source>
        <dbReference type="PROSITE-ProRule" id="PRU00441"/>
    </source>
</evidence>
<evidence type="ECO:0000305" key="4"/>
<reference key="1">
    <citation type="journal article" date="2006" name="Mol. Microbiol.">
        <title>Role of pathogenicity island-associated integrases in the genome plasticity of uropathogenic Escherichia coli strain 536.</title>
        <authorList>
            <person name="Hochhut B."/>
            <person name="Wilde C."/>
            <person name="Balling G."/>
            <person name="Middendorf B."/>
            <person name="Dobrindt U."/>
            <person name="Brzuszkiewicz E."/>
            <person name="Gottschalk G."/>
            <person name="Carniel E."/>
            <person name="Hacker J."/>
        </authorList>
    </citation>
    <scope>NUCLEOTIDE SEQUENCE [LARGE SCALE GENOMIC DNA]</scope>
    <source>
        <strain>536 / UPEC</strain>
    </source>
</reference>
<keyword id="KW-0997">Cell inner membrane</keyword>
<keyword id="KW-1003">Cell membrane</keyword>
<keyword id="KW-0472">Membrane</keyword>
<keyword id="KW-0812">Transmembrane</keyword>
<keyword id="KW-1133">Transmembrane helix</keyword>
<keyword id="KW-0813">Transport</keyword>
<accession>Q0TC08</accession>
<organism>
    <name type="scientific">Escherichia coli O6:K15:H31 (strain 536 / UPEC)</name>
    <dbReference type="NCBI Taxonomy" id="362663"/>
    <lineage>
        <taxon>Bacteria</taxon>
        <taxon>Pseudomonadati</taxon>
        <taxon>Pseudomonadota</taxon>
        <taxon>Gammaproteobacteria</taxon>
        <taxon>Enterobacterales</taxon>
        <taxon>Enterobacteriaceae</taxon>
        <taxon>Escherichia</taxon>
    </lineage>
</organism>
<name>UGPA_ECOL5</name>
<proteinExistence type="inferred from homology"/>
<sequence length="295" mass="33218">MSSSRPVFRSRWLPYLLVAPQLIITVIFFIWPAGEALWYSLQSVDPFGFSSQFVGLDNFVTLFHDSYYLDAFWTTIKFSTFVTVSGLLVSLFFAALVEYIVRGSRFYQTLMLLPYAVAPAVAAVLWIFLFNPGRGLITHFLAEFGYDWNHAQNSGQAMFLVVFASVWKQISYNFLFFYAALQSIPRSLIEAAAIDGAGPIRRFFKIALPLIAPVSFFLLVVNLVYAFFDTFPVIDAATSGGPVQATTTLIYKIYREGFTGLDLASSAAQSVVLMFLVIVLTVVQFRYVEGKVRYQ</sequence>
<comment type="function">
    <text evidence="1">Part of the ABC transporter complex UgpBAEC involved in sn-glycerol-3-phosphate (G3P) import. Probably responsible for the translocation of the substrate across the membrane.</text>
</comment>
<comment type="subunit">
    <text evidence="1">The complex is composed of two ATP-binding proteins (UgpC), two transmembrane proteins (UgpA and UgpE) and a solute-binding protein (UgpB).</text>
</comment>
<comment type="subcellular location">
    <subcellularLocation>
        <location evidence="1">Cell inner membrane</location>
        <topology evidence="2">Multi-pass membrane protein</topology>
    </subcellularLocation>
</comment>
<comment type="similarity">
    <text evidence="4">Belongs to the binding-protein-dependent transport system permease family. UgpAE subfamily.</text>
</comment>
<protein>
    <recommendedName>
        <fullName evidence="1">sn-glycerol-3-phosphate transport system permease protein UgpA</fullName>
    </recommendedName>
</protein>
<dbReference type="EMBL" id="CP000247">
    <property type="protein sequence ID" value="ABG71521.1"/>
    <property type="molecule type" value="Genomic_DNA"/>
</dbReference>
<dbReference type="RefSeq" id="WP_000099281.1">
    <property type="nucleotide sequence ID" value="NC_008253.1"/>
</dbReference>
<dbReference type="SMR" id="Q0TC08"/>
<dbReference type="KEGG" id="ecp:ECP_3545"/>
<dbReference type="HOGENOM" id="CLU_016047_0_2_6"/>
<dbReference type="Proteomes" id="UP000009182">
    <property type="component" value="Chromosome"/>
</dbReference>
<dbReference type="GO" id="GO:0005886">
    <property type="term" value="C:plasma membrane"/>
    <property type="evidence" value="ECO:0007669"/>
    <property type="project" value="UniProtKB-SubCell"/>
</dbReference>
<dbReference type="GO" id="GO:0055085">
    <property type="term" value="P:transmembrane transport"/>
    <property type="evidence" value="ECO:0007669"/>
    <property type="project" value="InterPro"/>
</dbReference>
<dbReference type="CDD" id="cd06261">
    <property type="entry name" value="TM_PBP2"/>
    <property type="match status" value="1"/>
</dbReference>
<dbReference type="FunFam" id="1.10.3720.10:FF:000028">
    <property type="entry name" value="sn-glycerol-3-phosphate ABC transporter permease UgpA"/>
    <property type="match status" value="1"/>
</dbReference>
<dbReference type="Gene3D" id="1.10.3720.10">
    <property type="entry name" value="MetI-like"/>
    <property type="match status" value="1"/>
</dbReference>
<dbReference type="InterPro" id="IPR000515">
    <property type="entry name" value="MetI-like"/>
</dbReference>
<dbReference type="InterPro" id="IPR035906">
    <property type="entry name" value="MetI-like_sf"/>
</dbReference>
<dbReference type="InterPro" id="IPR050809">
    <property type="entry name" value="UgpAE/MalFG_permease"/>
</dbReference>
<dbReference type="NCBIfam" id="NF007852">
    <property type="entry name" value="PRK10561.1"/>
    <property type="match status" value="1"/>
</dbReference>
<dbReference type="PANTHER" id="PTHR43227">
    <property type="entry name" value="BLL4140 PROTEIN"/>
    <property type="match status" value="1"/>
</dbReference>
<dbReference type="PANTHER" id="PTHR43227:SF9">
    <property type="entry name" value="SN-GLYCEROL-3-PHOSPHATE TRANSPORT SYSTEM PERMEASE PROTEIN UGPA"/>
    <property type="match status" value="1"/>
</dbReference>
<dbReference type="Pfam" id="PF00528">
    <property type="entry name" value="BPD_transp_1"/>
    <property type="match status" value="1"/>
</dbReference>
<dbReference type="SUPFAM" id="SSF161098">
    <property type="entry name" value="MetI-like"/>
    <property type="match status" value="1"/>
</dbReference>
<dbReference type="PROSITE" id="PS50928">
    <property type="entry name" value="ABC_TM1"/>
    <property type="match status" value="1"/>
</dbReference>
<feature type="chain" id="PRO_0000292823" description="sn-glycerol-3-phosphate transport system permease protein UgpA">
    <location>
        <begin position="1"/>
        <end position="295"/>
    </location>
</feature>
<feature type="topological domain" description="Cytoplasmic" evidence="2">
    <location>
        <begin position="1"/>
        <end position="11"/>
    </location>
</feature>
<feature type="transmembrane region" description="Helical" evidence="3">
    <location>
        <begin position="12"/>
        <end position="32"/>
    </location>
</feature>
<feature type="topological domain" description="Periplasmic" evidence="2">
    <location>
        <begin position="33"/>
        <end position="80"/>
    </location>
</feature>
<feature type="transmembrane region" description="Helical" evidence="3">
    <location>
        <begin position="81"/>
        <end position="101"/>
    </location>
</feature>
<feature type="topological domain" description="Cytoplasmic" evidence="2">
    <location>
        <begin position="102"/>
        <end position="109"/>
    </location>
</feature>
<feature type="transmembrane region" description="Helical" evidence="3">
    <location>
        <begin position="110"/>
        <end position="130"/>
    </location>
</feature>
<feature type="topological domain" description="Periplasmic" evidence="2">
    <location>
        <begin position="131"/>
        <end position="156"/>
    </location>
</feature>
<feature type="transmembrane region" description="Helical" evidence="3">
    <location>
        <begin position="157"/>
        <end position="177"/>
    </location>
</feature>
<feature type="topological domain" description="Cytoplasmic" evidence="2">
    <location>
        <begin position="178"/>
        <end position="207"/>
    </location>
</feature>
<feature type="transmembrane region" description="Helical" evidence="3">
    <location>
        <begin position="208"/>
        <end position="228"/>
    </location>
</feature>
<feature type="topological domain" description="Periplasmic" evidence="2">
    <location>
        <begin position="229"/>
        <end position="262"/>
    </location>
</feature>
<feature type="transmembrane region" description="Helical" evidence="3">
    <location>
        <begin position="263"/>
        <end position="283"/>
    </location>
</feature>
<feature type="topological domain" description="Cytoplasmic" evidence="2">
    <location>
        <begin position="284"/>
        <end position="295"/>
    </location>
</feature>
<feature type="domain" description="ABC transmembrane type-1" evidence="3">
    <location>
        <begin position="76"/>
        <end position="284"/>
    </location>
</feature>
<gene>
    <name type="primary">ugpA</name>
    <name type="ordered locus">ECP_3545</name>
</gene>